<reference key="1">
    <citation type="journal article" date="2004" name="Nat. Biotechnol.">
        <title>The genome sequence of the anaerobic, sulfate-reducing bacterium Desulfovibrio vulgaris Hildenborough.</title>
        <authorList>
            <person name="Heidelberg J.F."/>
            <person name="Seshadri R."/>
            <person name="Haveman S.A."/>
            <person name="Hemme C.L."/>
            <person name="Paulsen I.T."/>
            <person name="Kolonay J.F."/>
            <person name="Eisen J.A."/>
            <person name="Ward N.L."/>
            <person name="Methe B.A."/>
            <person name="Brinkac L.M."/>
            <person name="Daugherty S.C."/>
            <person name="DeBoy R.T."/>
            <person name="Dodson R.J."/>
            <person name="Durkin A.S."/>
            <person name="Madupu R."/>
            <person name="Nelson W.C."/>
            <person name="Sullivan S.A."/>
            <person name="Fouts D.E."/>
            <person name="Haft D.H."/>
            <person name="Selengut J."/>
            <person name="Peterson J.D."/>
            <person name="Davidsen T.M."/>
            <person name="Zafar N."/>
            <person name="Zhou L."/>
            <person name="Radune D."/>
            <person name="Dimitrov G."/>
            <person name="Hance M."/>
            <person name="Tran K."/>
            <person name="Khouri H.M."/>
            <person name="Gill J."/>
            <person name="Utterback T.R."/>
            <person name="Feldblyum T.V."/>
            <person name="Wall J.D."/>
            <person name="Voordouw G."/>
            <person name="Fraser C.M."/>
        </authorList>
    </citation>
    <scope>NUCLEOTIDE SEQUENCE [LARGE SCALE GENOMIC DNA]</scope>
    <source>
        <strain>ATCC 29579 / DSM 644 / CCUG 34227 / NCIMB 8303 / VKM B-1760 / Hildenborough</strain>
    </source>
</reference>
<name>Y440_NITV2</name>
<dbReference type="EMBL" id="AE017285">
    <property type="protein sequence ID" value="AAS94923.1"/>
    <property type="molecule type" value="Genomic_DNA"/>
</dbReference>
<dbReference type="RefSeq" id="WP_010937747.1">
    <property type="nucleotide sequence ID" value="NC_002937.3"/>
</dbReference>
<dbReference type="RefSeq" id="YP_009664.1">
    <property type="nucleotide sequence ID" value="NC_002937.3"/>
</dbReference>
<dbReference type="SMR" id="Q72EX8"/>
<dbReference type="STRING" id="882.DVU_0440"/>
<dbReference type="PaxDb" id="882-DVU_0440"/>
<dbReference type="EnsemblBacteria" id="AAS94923">
    <property type="protein sequence ID" value="AAS94923"/>
    <property type="gene ID" value="DVU_0440"/>
</dbReference>
<dbReference type="KEGG" id="dvu:DVU_0440"/>
<dbReference type="PATRIC" id="fig|882.5.peg.418"/>
<dbReference type="eggNOG" id="COG3681">
    <property type="taxonomic scope" value="Bacteria"/>
</dbReference>
<dbReference type="HOGENOM" id="CLU_051840_0_0_7"/>
<dbReference type="OrthoDB" id="41906at2"/>
<dbReference type="PhylomeDB" id="Q72EX8"/>
<dbReference type="Proteomes" id="UP000002194">
    <property type="component" value="Chromosome"/>
</dbReference>
<dbReference type="GO" id="GO:0080146">
    <property type="term" value="F:L-cysteine desulfhydrase activity"/>
    <property type="evidence" value="ECO:0007669"/>
    <property type="project" value="TreeGrafter"/>
</dbReference>
<dbReference type="GO" id="GO:0019450">
    <property type="term" value="P:L-cysteine catabolic process to pyruvate"/>
    <property type="evidence" value="ECO:0007669"/>
    <property type="project" value="TreeGrafter"/>
</dbReference>
<dbReference type="HAMAP" id="MF_01845">
    <property type="entry name" value="UPF0597"/>
    <property type="match status" value="1"/>
</dbReference>
<dbReference type="InterPro" id="IPR005130">
    <property type="entry name" value="Ser_deHydtase-like_asu"/>
</dbReference>
<dbReference type="InterPro" id="IPR021144">
    <property type="entry name" value="UPF0597"/>
</dbReference>
<dbReference type="PANTHER" id="PTHR30501">
    <property type="entry name" value="UPF0597 PROTEIN YHAM"/>
    <property type="match status" value="1"/>
</dbReference>
<dbReference type="PANTHER" id="PTHR30501:SF2">
    <property type="entry name" value="UPF0597 PROTEIN YHAM"/>
    <property type="match status" value="1"/>
</dbReference>
<dbReference type="Pfam" id="PF03313">
    <property type="entry name" value="SDH_alpha"/>
    <property type="match status" value="1"/>
</dbReference>
<dbReference type="PIRSF" id="PIRSF006054">
    <property type="entry name" value="UCP006054"/>
    <property type="match status" value="1"/>
</dbReference>
<comment type="similarity">
    <text evidence="1">Belongs to the UPF0597 family.</text>
</comment>
<feature type="chain" id="PRO_0000339814" description="UPF0597 protein DVU_0440">
    <location>
        <begin position="1"/>
        <end position="443"/>
    </location>
</feature>
<accession>Q72EX8</accession>
<organism>
    <name type="scientific">Nitratidesulfovibrio vulgaris (strain ATCC 29579 / DSM 644 / CCUG 34227 / NCIMB 8303 / VKM B-1760 / Hildenborough)</name>
    <name type="common">Desulfovibrio vulgaris</name>
    <dbReference type="NCBI Taxonomy" id="882"/>
    <lineage>
        <taxon>Bacteria</taxon>
        <taxon>Pseudomonadati</taxon>
        <taxon>Thermodesulfobacteriota</taxon>
        <taxon>Desulfovibrionia</taxon>
        <taxon>Desulfovibrionales</taxon>
        <taxon>Desulfovibrionaceae</taxon>
        <taxon>Nitratidesulfovibrio</taxon>
    </lineage>
</organism>
<sequence length="443" mass="44663">MDLALFFRNEVKPALGCTEPGAVAYAASIAARHCPGEPLSVALSLSLSMFKNGRDVGIPGTGGLRGNRLAAVLGVLAGDADKGLMALEHIDMAVVERAQTLLDAGMVTEEVVDGVPGVYAAVTLRCAGHEVTVTVAGRHDRVASIVVDGEVVGGEGMERAPEADGTLHGGASCEPSASFTKPPLPAYLEELRECDFAQLWDMAAGIDATLEQELLRGAAMNMAVARMGLESGWGLGVGHTLAAHAEAADLHARIRFMAGAAADVRMAGAPQPVMSSAGSGNHGITATVPVAVAAEGLGVSPRVQAEALALSHLVTGYLKAHTGRLTPICGCSVAAGAGAAAGIVKVLGGNAVQAERAVASLMASLMGMLCDGAKGSCGLKVATAAGEAYAAALLGMDDRGVQRPEGVVNPDIATTARALARLSREGFAAADAVMVELLGGGKH</sequence>
<gene>
    <name type="ordered locus">DVU_0440</name>
</gene>
<proteinExistence type="inferred from homology"/>
<protein>
    <recommendedName>
        <fullName evidence="1">UPF0597 protein DVU_0440</fullName>
    </recommendedName>
</protein>
<keyword id="KW-1185">Reference proteome</keyword>
<evidence type="ECO:0000255" key="1">
    <source>
        <dbReference type="HAMAP-Rule" id="MF_01845"/>
    </source>
</evidence>